<accession>Q9YFY5</accession>
<sequence>MGVNLRELIPPEARREVELRALSGYVLALDAYNMLYQFLTAIRQPDGTPLLDREGRVTSHLSGLFYRTINLVEEGIKPVYVFDGKPPEMKSREVEERLRRKAEAEARYRRAVEAGEVEEARKYAMMAARLTSDMVEESKELLDAMGMPWVQAPAEGEAQAAYMARKGDAWATGSQDYDSLLFGSPRLVRNLAITGRRKLPGRDQYVEIKPEIIELEPLLSKLGITREQLIAVGILLGTDYNPGGVRGYGPKTALRLVKSLGDPMKVLASVPRGEYDPDYLRKVYEYFLNPPVTDDYKIEFRKPDQDKVREILVERHDFNPERVERALERLGKAYREKLRGRQSRLDMWFG</sequence>
<reference key="1">
    <citation type="journal article" date="1999" name="DNA Res.">
        <title>Complete genome sequence of an aerobic hyper-thermophilic crenarchaeon, Aeropyrum pernix K1.</title>
        <authorList>
            <person name="Kawarabayasi Y."/>
            <person name="Hino Y."/>
            <person name="Horikawa H."/>
            <person name="Yamazaki S."/>
            <person name="Haikawa Y."/>
            <person name="Jin-no K."/>
            <person name="Takahashi M."/>
            <person name="Sekine M."/>
            <person name="Baba S."/>
            <person name="Ankai A."/>
            <person name="Kosugi H."/>
            <person name="Hosoyama A."/>
            <person name="Fukui S."/>
            <person name="Nagai Y."/>
            <person name="Nishijima K."/>
            <person name="Nakazawa H."/>
            <person name="Takamiya M."/>
            <person name="Masuda S."/>
            <person name="Funahashi T."/>
            <person name="Tanaka T."/>
            <person name="Kudoh Y."/>
            <person name="Yamazaki J."/>
            <person name="Kushida N."/>
            <person name="Oguchi A."/>
            <person name="Aoki K."/>
            <person name="Kubota K."/>
            <person name="Nakamura Y."/>
            <person name="Nomura N."/>
            <person name="Sako Y."/>
            <person name="Kikuchi H."/>
        </authorList>
    </citation>
    <scope>NUCLEOTIDE SEQUENCE [LARGE SCALE GENOMIC DNA]</scope>
    <source>
        <strain>ATCC 700893 / DSM 11879 / JCM 9820 / NBRC 100138 / K1</strain>
    </source>
</reference>
<dbReference type="EC" id="3.1.-.-" evidence="2"/>
<dbReference type="EMBL" id="BA000002">
    <property type="protein sequence ID" value="BAA79026.2"/>
    <property type="molecule type" value="Genomic_DNA"/>
</dbReference>
<dbReference type="PIR" id="H72765">
    <property type="entry name" value="H72765"/>
</dbReference>
<dbReference type="RefSeq" id="WP_010865499.1">
    <property type="nucleotide sequence ID" value="NC_000854.2"/>
</dbReference>
<dbReference type="SMR" id="Q9YFY5"/>
<dbReference type="STRING" id="272557.APE_0115.1"/>
<dbReference type="EnsemblBacteria" id="BAA79026">
    <property type="protein sequence ID" value="BAA79026"/>
    <property type="gene ID" value="APE_0115.1"/>
</dbReference>
<dbReference type="GeneID" id="1445657"/>
<dbReference type="KEGG" id="ape:APE_0115.1"/>
<dbReference type="PATRIC" id="fig|272557.25.peg.75"/>
<dbReference type="eggNOG" id="arCOG04050">
    <property type="taxonomic scope" value="Archaea"/>
</dbReference>
<dbReference type="Proteomes" id="UP000002518">
    <property type="component" value="Chromosome"/>
</dbReference>
<dbReference type="GO" id="GO:0008409">
    <property type="term" value="F:5'-3' exonuclease activity"/>
    <property type="evidence" value="ECO:0007669"/>
    <property type="project" value="UniProtKB-UniRule"/>
</dbReference>
<dbReference type="GO" id="GO:0017108">
    <property type="term" value="F:5'-flap endonuclease activity"/>
    <property type="evidence" value="ECO:0007669"/>
    <property type="project" value="UniProtKB-UniRule"/>
</dbReference>
<dbReference type="GO" id="GO:0003677">
    <property type="term" value="F:DNA binding"/>
    <property type="evidence" value="ECO:0007669"/>
    <property type="project" value="UniProtKB-UniRule"/>
</dbReference>
<dbReference type="GO" id="GO:0000287">
    <property type="term" value="F:magnesium ion binding"/>
    <property type="evidence" value="ECO:0007669"/>
    <property type="project" value="UniProtKB-UniRule"/>
</dbReference>
<dbReference type="GO" id="GO:0006281">
    <property type="term" value="P:DNA repair"/>
    <property type="evidence" value="ECO:0007669"/>
    <property type="project" value="UniProtKB-UniRule"/>
</dbReference>
<dbReference type="GO" id="GO:0043137">
    <property type="term" value="P:DNA replication, removal of RNA primer"/>
    <property type="evidence" value="ECO:0007669"/>
    <property type="project" value="UniProtKB-UniRule"/>
</dbReference>
<dbReference type="CDD" id="cd09903">
    <property type="entry name" value="H3TH_FEN1-Arc"/>
    <property type="match status" value="1"/>
</dbReference>
<dbReference type="CDD" id="cd09867">
    <property type="entry name" value="PIN_FEN1"/>
    <property type="match status" value="1"/>
</dbReference>
<dbReference type="FunFam" id="3.40.50.1010:FF:000016">
    <property type="entry name" value="Flap endonuclease 1"/>
    <property type="match status" value="1"/>
</dbReference>
<dbReference type="Gene3D" id="1.10.150.20">
    <property type="entry name" value="5' to 3' exonuclease, C-terminal subdomain"/>
    <property type="match status" value="1"/>
</dbReference>
<dbReference type="Gene3D" id="3.40.50.1010">
    <property type="entry name" value="5'-nuclease"/>
    <property type="match status" value="1"/>
</dbReference>
<dbReference type="HAMAP" id="MF_00614">
    <property type="entry name" value="Fen"/>
    <property type="match status" value="1"/>
</dbReference>
<dbReference type="InterPro" id="IPR036279">
    <property type="entry name" value="5-3_exonuclease_C_sf"/>
</dbReference>
<dbReference type="InterPro" id="IPR023426">
    <property type="entry name" value="Flap_endonuc"/>
</dbReference>
<dbReference type="InterPro" id="IPR019973">
    <property type="entry name" value="Flap_endonuc_arc"/>
</dbReference>
<dbReference type="InterPro" id="IPR008918">
    <property type="entry name" value="HhH2"/>
</dbReference>
<dbReference type="InterPro" id="IPR029060">
    <property type="entry name" value="PIN-like_dom_sf"/>
</dbReference>
<dbReference type="InterPro" id="IPR006086">
    <property type="entry name" value="XPG-I_dom"/>
</dbReference>
<dbReference type="InterPro" id="IPR006084">
    <property type="entry name" value="XPG/Rad2"/>
</dbReference>
<dbReference type="InterPro" id="IPR019974">
    <property type="entry name" value="XPG_CS"/>
</dbReference>
<dbReference type="InterPro" id="IPR006085">
    <property type="entry name" value="XPG_DNA_repair_N"/>
</dbReference>
<dbReference type="NCBIfam" id="TIGR03674">
    <property type="entry name" value="fen_arch"/>
    <property type="match status" value="1"/>
</dbReference>
<dbReference type="PANTHER" id="PTHR11081:SF9">
    <property type="entry name" value="FLAP ENDONUCLEASE 1"/>
    <property type="match status" value="1"/>
</dbReference>
<dbReference type="PANTHER" id="PTHR11081">
    <property type="entry name" value="FLAP ENDONUCLEASE FAMILY MEMBER"/>
    <property type="match status" value="1"/>
</dbReference>
<dbReference type="Pfam" id="PF00867">
    <property type="entry name" value="XPG_I"/>
    <property type="match status" value="1"/>
</dbReference>
<dbReference type="Pfam" id="PF00752">
    <property type="entry name" value="XPG_N"/>
    <property type="match status" value="1"/>
</dbReference>
<dbReference type="PRINTS" id="PR00853">
    <property type="entry name" value="XPGRADSUPER"/>
</dbReference>
<dbReference type="SMART" id="SM00279">
    <property type="entry name" value="HhH2"/>
    <property type="match status" value="1"/>
</dbReference>
<dbReference type="SMART" id="SM00484">
    <property type="entry name" value="XPGI"/>
    <property type="match status" value="1"/>
</dbReference>
<dbReference type="SMART" id="SM00485">
    <property type="entry name" value="XPGN"/>
    <property type="match status" value="1"/>
</dbReference>
<dbReference type="SUPFAM" id="SSF47807">
    <property type="entry name" value="5' to 3' exonuclease, C-terminal subdomain"/>
    <property type="match status" value="1"/>
</dbReference>
<dbReference type="SUPFAM" id="SSF88723">
    <property type="entry name" value="PIN domain-like"/>
    <property type="match status" value="1"/>
</dbReference>
<dbReference type="PROSITE" id="PS00841">
    <property type="entry name" value="XPG_1"/>
    <property type="match status" value="1"/>
</dbReference>
<keyword id="KW-0227">DNA damage</keyword>
<keyword id="KW-0234">DNA repair</keyword>
<keyword id="KW-0235">DNA replication</keyword>
<keyword id="KW-0255">Endonuclease</keyword>
<keyword id="KW-0269">Exonuclease</keyword>
<keyword id="KW-0378">Hydrolase</keyword>
<keyword id="KW-0460">Magnesium</keyword>
<keyword id="KW-0479">Metal-binding</keyword>
<keyword id="KW-0540">Nuclease</keyword>
<keyword id="KW-1185">Reference proteome</keyword>
<organism>
    <name type="scientific">Aeropyrum pernix (strain ATCC 700893 / DSM 11879 / JCM 9820 / NBRC 100138 / K1)</name>
    <dbReference type="NCBI Taxonomy" id="272557"/>
    <lineage>
        <taxon>Archaea</taxon>
        <taxon>Thermoproteota</taxon>
        <taxon>Thermoprotei</taxon>
        <taxon>Desulfurococcales</taxon>
        <taxon>Desulfurococcaceae</taxon>
        <taxon>Aeropyrum</taxon>
    </lineage>
</organism>
<proteinExistence type="inferred from homology"/>
<name>FEN_AERPE</name>
<gene>
    <name evidence="2" type="primary">fen</name>
    <name type="ordered locus">APE_0115.1</name>
</gene>
<protein>
    <recommendedName>
        <fullName evidence="2">Flap endonuclease 1</fullName>
        <shortName evidence="2">FEN-1</shortName>
        <ecNumber evidence="2">3.1.-.-</ecNumber>
    </recommendedName>
    <alternativeName>
        <fullName evidence="2">Flap structure-specific endonuclease 1</fullName>
    </alternativeName>
</protein>
<evidence type="ECO:0000250" key="1"/>
<evidence type="ECO:0000255" key="2">
    <source>
        <dbReference type="HAMAP-Rule" id="MF_00614"/>
    </source>
</evidence>
<comment type="function">
    <text evidence="1">Structure-specific nuclease with 5'-flap endonuclease and 5'-3' exonuclease activities involved in DNA replication and repair. During DNA replication, cleaves the 5'-overhanging flap structure that is generated by displacement synthesis when DNA polymerase encounters the 5'-end of a downstream Okazaki fragment. Binds the unpaired 3'-DNA end and kinks the DNA to facilitate 5' cleavage specificity. Cleaves one nucleotide into the double-stranded DNA from the junction in flap DNA, leaving a nick for ligation. Also involved in the base excision repair (BER) pathway. Acts as a genome stabilization factor that prevents flaps from equilibrating into structures that lead to duplications and deletions. Also possesses 5'-3' exonuclease activity on nicked or gapped double-stranded DNA (By similarity).</text>
</comment>
<comment type="cofactor">
    <cofactor evidence="2">
        <name>Mg(2+)</name>
        <dbReference type="ChEBI" id="CHEBI:18420"/>
    </cofactor>
    <text evidence="2">Binds 2 magnesium ions per subunit. They probably participate in the reaction catalyzed by the enzyme. May bind an additional third magnesium ion after substrate binding.</text>
</comment>
<comment type="subunit">
    <text evidence="2">Interacts with PCNA. PCNA stimulates the nuclease activity without altering cleavage specificity.</text>
</comment>
<comment type="similarity">
    <text evidence="2">Belongs to the XPG/RAD2 endonuclease family. FEN1 subfamily.</text>
</comment>
<feature type="chain" id="PRO_0000154049" description="Flap endonuclease 1">
    <location>
        <begin position="1"/>
        <end position="350"/>
    </location>
</feature>
<feature type="region of interest" description="N-domain">
    <location>
        <begin position="1"/>
        <end position="101"/>
    </location>
</feature>
<feature type="region of interest" description="I-domain">
    <location>
        <begin position="119"/>
        <end position="261"/>
    </location>
</feature>
<feature type="region of interest" description="Interaction with PCNA" evidence="2">
    <location>
        <begin position="341"/>
        <end position="349"/>
    </location>
</feature>
<feature type="binding site" evidence="2">
    <location>
        <position position="30"/>
    </location>
    <ligand>
        <name>Mg(2+)</name>
        <dbReference type="ChEBI" id="CHEBI:18420"/>
        <label>1</label>
    </ligand>
</feature>
<feature type="binding site" evidence="2">
    <location>
        <position position="83"/>
    </location>
    <ligand>
        <name>Mg(2+)</name>
        <dbReference type="ChEBI" id="CHEBI:18420"/>
        <label>1</label>
    </ligand>
</feature>
<feature type="binding site" evidence="2">
    <location>
        <position position="155"/>
    </location>
    <ligand>
        <name>Mg(2+)</name>
        <dbReference type="ChEBI" id="CHEBI:18420"/>
        <label>1</label>
    </ligand>
</feature>
<feature type="binding site" evidence="2">
    <location>
        <position position="157"/>
    </location>
    <ligand>
        <name>Mg(2+)</name>
        <dbReference type="ChEBI" id="CHEBI:18420"/>
        <label>1</label>
    </ligand>
</feature>
<feature type="binding site" evidence="2">
    <location>
        <position position="176"/>
    </location>
    <ligand>
        <name>Mg(2+)</name>
        <dbReference type="ChEBI" id="CHEBI:18420"/>
        <label>2</label>
    </ligand>
</feature>
<feature type="binding site" evidence="2">
    <location>
        <position position="178"/>
    </location>
    <ligand>
        <name>Mg(2+)</name>
        <dbReference type="ChEBI" id="CHEBI:18420"/>
        <label>2</label>
    </ligand>
</feature>
<feature type="binding site" evidence="2">
    <location>
        <position position="239"/>
    </location>
    <ligand>
        <name>Mg(2+)</name>
        <dbReference type="ChEBI" id="CHEBI:18420"/>
        <label>2</label>
    </ligand>
</feature>